<reference key="1">
    <citation type="journal article" date="2005" name="Science">
        <title>The transcriptional landscape of the mammalian genome.</title>
        <authorList>
            <person name="Carninci P."/>
            <person name="Kasukawa T."/>
            <person name="Katayama S."/>
            <person name="Gough J."/>
            <person name="Frith M.C."/>
            <person name="Maeda N."/>
            <person name="Oyama R."/>
            <person name="Ravasi T."/>
            <person name="Lenhard B."/>
            <person name="Wells C."/>
            <person name="Kodzius R."/>
            <person name="Shimokawa K."/>
            <person name="Bajic V.B."/>
            <person name="Brenner S.E."/>
            <person name="Batalov S."/>
            <person name="Forrest A.R."/>
            <person name="Zavolan M."/>
            <person name="Davis M.J."/>
            <person name="Wilming L.G."/>
            <person name="Aidinis V."/>
            <person name="Allen J.E."/>
            <person name="Ambesi-Impiombato A."/>
            <person name="Apweiler R."/>
            <person name="Aturaliya R.N."/>
            <person name="Bailey T.L."/>
            <person name="Bansal M."/>
            <person name="Baxter L."/>
            <person name="Beisel K.W."/>
            <person name="Bersano T."/>
            <person name="Bono H."/>
            <person name="Chalk A.M."/>
            <person name="Chiu K.P."/>
            <person name="Choudhary V."/>
            <person name="Christoffels A."/>
            <person name="Clutterbuck D.R."/>
            <person name="Crowe M.L."/>
            <person name="Dalla E."/>
            <person name="Dalrymple B.P."/>
            <person name="de Bono B."/>
            <person name="Della Gatta G."/>
            <person name="di Bernardo D."/>
            <person name="Down T."/>
            <person name="Engstrom P."/>
            <person name="Fagiolini M."/>
            <person name="Faulkner G."/>
            <person name="Fletcher C.F."/>
            <person name="Fukushima T."/>
            <person name="Furuno M."/>
            <person name="Futaki S."/>
            <person name="Gariboldi M."/>
            <person name="Georgii-Hemming P."/>
            <person name="Gingeras T.R."/>
            <person name="Gojobori T."/>
            <person name="Green R.E."/>
            <person name="Gustincich S."/>
            <person name="Harbers M."/>
            <person name="Hayashi Y."/>
            <person name="Hensch T.K."/>
            <person name="Hirokawa N."/>
            <person name="Hill D."/>
            <person name="Huminiecki L."/>
            <person name="Iacono M."/>
            <person name="Ikeo K."/>
            <person name="Iwama A."/>
            <person name="Ishikawa T."/>
            <person name="Jakt M."/>
            <person name="Kanapin A."/>
            <person name="Katoh M."/>
            <person name="Kawasawa Y."/>
            <person name="Kelso J."/>
            <person name="Kitamura H."/>
            <person name="Kitano H."/>
            <person name="Kollias G."/>
            <person name="Krishnan S.P."/>
            <person name="Kruger A."/>
            <person name="Kummerfeld S.K."/>
            <person name="Kurochkin I.V."/>
            <person name="Lareau L.F."/>
            <person name="Lazarevic D."/>
            <person name="Lipovich L."/>
            <person name="Liu J."/>
            <person name="Liuni S."/>
            <person name="McWilliam S."/>
            <person name="Madan Babu M."/>
            <person name="Madera M."/>
            <person name="Marchionni L."/>
            <person name="Matsuda H."/>
            <person name="Matsuzawa S."/>
            <person name="Miki H."/>
            <person name="Mignone F."/>
            <person name="Miyake S."/>
            <person name="Morris K."/>
            <person name="Mottagui-Tabar S."/>
            <person name="Mulder N."/>
            <person name="Nakano N."/>
            <person name="Nakauchi H."/>
            <person name="Ng P."/>
            <person name="Nilsson R."/>
            <person name="Nishiguchi S."/>
            <person name="Nishikawa S."/>
            <person name="Nori F."/>
            <person name="Ohara O."/>
            <person name="Okazaki Y."/>
            <person name="Orlando V."/>
            <person name="Pang K.C."/>
            <person name="Pavan W.J."/>
            <person name="Pavesi G."/>
            <person name="Pesole G."/>
            <person name="Petrovsky N."/>
            <person name="Piazza S."/>
            <person name="Reed J."/>
            <person name="Reid J.F."/>
            <person name="Ring B.Z."/>
            <person name="Ringwald M."/>
            <person name="Rost B."/>
            <person name="Ruan Y."/>
            <person name="Salzberg S.L."/>
            <person name="Sandelin A."/>
            <person name="Schneider C."/>
            <person name="Schoenbach C."/>
            <person name="Sekiguchi K."/>
            <person name="Semple C.A."/>
            <person name="Seno S."/>
            <person name="Sessa L."/>
            <person name="Sheng Y."/>
            <person name="Shibata Y."/>
            <person name="Shimada H."/>
            <person name="Shimada K."/>
            <person name="Silva D."/>
            <person name="Sinclair B."/>
            <person name="Sperling S."/>
            <person name="Stupka E."/>
            <person name="Sugiura K."/>
            <person name="Sultana R."/>
            <person name="Takenaka Y."/>
            <person name="Taki K."/>
            <person name="Tammoja K."/>
            <person name="Tan S.L."/>
            <person name="Tang S."/>
            <person name="Taylor M.S."/>
            <person name="Tegner J."/>
            <person name="Teichmann S.A."/>
            <person name="Ueda H.R."/>
            <person name="van Nimwegen E."/>
            <person name="Verardo R."/>
            <person name="Wei C.L."/>
            <person name="Yagi K."/>
            <person name="Yamanishi H."/>
            <person name="Zabarovsky E."/>
            <person name="Zhu S."/>
            <person name="Zimmer A."/>
            <person name="Hide W."/>
            <person name="Bult C."/>
            <person name="Grimmond S.M."/>
            <person name="Teasdale R.D."/>
            <person name="Liu E.T."/>
            <person name="Brusic V."/>
            <person name="Quackenbush J."/>
            <person name="Wahlestedt C."/>
            <person name="Mattick J.S."/>
            <person name="Hume D.A."/>
            <person name="Kai C."/>
            <person name="Sasaki D."/>
            <person name="Tomaru Y."/>
            <person name="Fukuda S."/>
            <person name="Kanamori-Katayama M."/>
            <person name="Suzuki M."/>
            <person name="Aoki J."/>
            <person name="Arakawa T."/>
            <person name="Iida J."/>
            <person name="Imamura K."/>
            <person name="Itoh M."/>
            <person name="Kato T."/>
            <person name="Kawaji H."/>
            <person name="Kawagashira N."/>
            <person name="Kawashima T."/>
            <person name="Kojima M."/>
            <person name="Kondo S."/>
            <person name="Konno H."/>
            <person name="Nakano K."/>
            <person name="Ninomiya N."/>
            <person name="Nishio T."/>
            <person name="Okada M."/>
            <person name="Plessy C."/>
            <person name="Shibata K."/>
            <person name="Shiraki T."/>
            <person name="Suzuki S."/>
            <person name="Tagami M."/>
            <person name="Waki K."/>
            <person name="Watahiki A."/>
            <person name="Okamura-Oho Y."/>
            <person name="Suzuki H."/>
            <person name="Kawai J."/>
            <person name="Hayashizaki Y."/>
        </authorList>
    </citation>
    <scope>NUCLEOTIDE SEQUENCE [LARGE SCALE MRNA] (ISOFORMS 1 AND 2)</scope>
    <source>
        <strain>C57BL/6J</strain>
        <strain>NOD</strain>
        <tissue>Diencephalon</tissue>
        <tissue>Hippocampus</tissue>
        <tissue>Olfactory bulb</tissue>
        <tissue>Sympathetic ganglion</tissue>
        <tissue>Vagina</tissue>
    </source>
</reference>
<reference key="2">
    <citation type="journal article" date="2009" name="PLoS Biol.">
        <title>Lineage-specific biology revealed by a finished genome assembly of the mouse.</title>
        <authorList>
            <person name="Church D.M."/>
            <person name="Goodstadt L."/>
            <person name="Hillier L.W."/>
            <person name="Zody M.C."/>
            <person name="Goldstein S."/>
            <person name="She X."/>
            <person name="Bult C.J."/>
            <person name="Agarwala R."/>
            <person name="Cherry J.L."/>
            <person name="DiCuccio M."/>
            <person name="Hlavina W."/>
            <person name="Kapustin Y."/>
            <person name="Meric P."/>
            <person name="Maglott D."/>
            <person name="Birtle Z."/>
            <person name="Marques A.C."/>
            <person name="Graves T."/>
            <person name="Zhou S."/>
            <person name="Teague B."/>
            <person name="Potamousis K."/>
            <person name="Churas C."/>
            <person name="Place M."/>
            <person name="Herschleb J."/>
            <person name="Runnheim R."/>
            <person name="Forrest D."/>
            <person name="Amos-Landgraf J."/>
            <person name="Schwartz D.C."/>
            <person name="Cheng Z."/>
            <person name="Lindblad-Toh K."/>
            <person name="Eichler E.E."/>
            <person name="Ponting C.P."/>
        </authorList>
    </citation>
    <scope>NUCLEOTIDE SEQUENCE [LARGE SCALE GENOMIC DNA]</scope>
    <source>
        <strain>C57BL/6J</strain>
    </source>
</reference>
<reference key="3">
    <citation type="journal article" date="2004" name="Genome Res.">
        <title>The status, quality, and expansion of the NIH full-length cDNA project: the Mammalian Gene Collection (MGC).</title>
        <authorList>
            <consortium name="The MGC Project Team"/>
        </authorList>
    </citation>
    <scope>NUCLEOTIDE SEQUENCE [LARGE SCALE MRNA] (ISOFORM 1)</scope>
    <source>
        <tissue>Mammary tumor</tissue>
    </source>
</reference>
<reference key="4">
    <citation type="journal article" date="2020" name="Cells">
        <title>Selective ablation of dehydrodolichyl diphosphate synthase in murine retinal pigment epithelium (RPE) causes RPE atrophy and retinal degeneration.</title>
        <authorList>
            <person name="DeRamus M.L."/>
            <person name="Davis S.J."/>
            <person name="Rao S.R."/>
            <person name="Nyankerh C."/>
            <person name="Stacks D."/>
            <person name="Kraft T.W."/>
            <person name="Fliesler S.J."/>
            <person name="Pittler S.J."/>
        </authorList>
    </citation>
    <scope>DISRUPTION PHENOTYPE</scope>
</reference>
<reference key="5">
    <citation type="journal article" date="2020" name="Cells">
        <title>Lack of Overt Retinal Degeneration in a K42E Dhdds Knock-In Mouse Model of RP59.</title>
        <authorList>
            <person name="Ramachandra Rao S."/>
            <person name="Fliesler S.J."/>
            <person name="Kotla P."/>
            <person name="Nguyen M.N."/>
            <person name="Pittler S.J."/>
        </authorList>
    </citation>
    <scope>MUTAGENESIS OF LYS-42</scope>
</reference>
<reference key="6">
    <citation type="journal article" date="2020" name="IScience">
        <title>Retinal degeneration caused by rod-specific Dhdds ablation occurs without concomitant inhibition of protein N-glycosylation.</title>
        <authorList>
            <person name="Ramachandra Rao S."/>
            <person name="Skelton L.A."/>
            <person name="Wu F."/>
            <person name="Onysk A."/>
            <person name="Spolnik G."/>
            <person name="Danikiewicz W."/>
            <person name="Butler M.C."/>
            <person name="Stacks D.A."/>
            <person name="Surmacz L."/>
            <person name="Mu X."/>
            <person name="Swiezewska E."/>
            <person name="Pittler S.J."/>
            <person name="Fliesler S.J."/>
        </authorList>
    </citation>
    <scope>DISRUPTION PHENOTYPE</scope>
</reference>
<reference key="7">
    <citation type="journal article" date="2023" name="Cell Death Dis.">
        <title>A Dhdds K42E knock-in RP59 mouse model shows inner retina pathology and defective synaptic transmission.</title>
        <authorList>
            <person name="Nguyen M.N."/>
            <person name="Chakraborty D."/>
            <person name="Rao S.R."/>
            <person name="Onysk A."/>
            <person name="Radkiewicz M."/>
            <person name="Surmacz L."/>
            <person name="Swiezewska E."/>
            <person name="Soubeyrand E."/>
            <person name="Akhtar T.A."/>
            <person name="Kraft T.W."/>
            <person name="Sherry D.M."/>
            <person name="Fliesler S.J."/>
            <person name="Pittler S.J."/>
        </authorList>
    </citation>
    <scope>MUTAGENESIS OF LYS-42</scope>
</reference>
<comment type="function">
    <text evidence="1">With NUS1, forms the dehydrodolichyl diphosphate synthase (DDS) complex, an essential component of the dolichol monophosphate (Dol-P) biosynthetic machinery. Both subunits contribute to enzymatic activity, i.e. condensation of multiple copies of isopentenyl pyrophosphate (IPP) to farnesyl pyrophosphate (FPP) to produce dehydrodolichyl diphosphate (Dedol-PP), a precursor of dolichol phosphate which is utilized as a sugar carrier in protein glycosylation in the endoplasmic reticulum (ER). Synthesizes long-chain polyprenols, mostly of C95 and C100 chain length. Regulates the glycosylation and stability of nascent NPC2, thereby promoting trafficking of LDL-derived cholesterol.</text>
</comment>
<comment type="catalytic activity">
    <reaction evidence="1">
        <text>n isopentenyl diphosphate + (2E,6E)-farnesyl diphosphate = a di-trans,poly-cis-polyprenyl diphosphate + n diphosphate</text>
        <dbReference type="Rhea" id="RHEA:53008"/>
        <dbReference type="Rhea" id="RHEA-COMP:19494"/>
        <dbReference type="ChEBI" id="CHEBI:33019"/>
        <dbReference type="ChEBI" id="CHEBI:128769"/>
        <dbReference type="ChEBI" id="CHEBI:136960"/>
        <dbReference type="ChEBI" id="CHEBI:175763"/>
        <dbReference type="EC" id="2.5.1.87"/>
    </reaction>
</comment>
<comment type="cofactor">
    <cofactor evidence="1">
        <name>Mg(2+)</name>
        <dbReference type="ChEBI" id="CHEBI:18420"/>
    </cofactor>
    <text evidence="1">Binds 1 magnesium ion per subunit.</text>
</comment>
<comment type="pathway">
    <text evidence="1">Protein modification; protein glycosylation.</text>
</comment>
<comment type="pathway">
    <text evidence="1">Lipid metabolism.</text>
</comment>
<comment type="subunit">
    <text evidence="1">The active dehydrodolichyl diphosphate synthase complex is a heterotetramer composed of a dimer of heterodimer of DHDDS and NUS1. Interacts with NPC2.</text>
</comment>
<comment type="subcellular location">
    <subcellularLocation>
        <location evidence="1">Endoplasmic reticulum membrane</location>
        <topology evidence="1">Peripheral membrane protein</topology>
    </subcellularLocation>
    <text evidence="1">colocalizes with calnexin.</text>
</comment>
<comment type="alternative products">
    <event type="alternative splicing"/>
    <isoform>
        <id>Q99KU1-1</id>
        <name>1</name>
        <sequence type="displayed"/>
    </isoform>
    <isoform>
        <id>Q99KU1-2</id>
        <name>2</name>
        <sequence type="described" ref="VSP_010032"/>
    </isoform>
</comment>
<comment type="domain">
    <text evidence="1">The catalytic site at NUS1-DHDDS interface accomodates both the allylic and the homoallylic IPP substrates to the S1 and S2 pockets respectively. The beta-phosphate groups of IPP substrates form hydrogen bonds with the RXG motif of NUS1 and four conserved residues of DHDDS (Arg-85, Arg-205, Arg-211 and Ser-213), while the allylic isopentenyl group is pointed toward the hydrophobic tunnel of the S1 pocket where the product elongation occurs.</text>
</comment>
<comment type="disruption phenotype">
    <text evidence="2 4 7">Embryonic lethality (PubMed:32245241). Conditional deletion in retinal pigment epithelium causes deficits in the retinal pigment epithelium and the photoreceptors, leading to retinal degeneration (PubMed:32245241). Conditional deletion in rod photoreceptor cells causes retinal degeneration (PubMed:32526701).</text>
</comment>
<comment type="similarity">
    <text evidence="8">Belongs to the UPP synthase family.</text>
</comment>
<feature type="chain" id="PRO_0000123750" description="Dehydrodolichyl diphosphate synthase complex subunit Dhdds">
    <location>
        <begin position="1"/>
        <end position="333"/>
    </location>
</feature>
<feature type="binding site" evidence="1">
    <location>
        <position position="34"/>
    </location>
    <ligand>
        <name>(2E,6E)-farnesyl diphosphate</name>
        <dbReference type="ChEBI" id="CHEBI:175763"/>
    </ligand>
</feature>
<feature type="binding site" evidence="1">
    <location>
        <position position="34"/>
    </location>
    <ligand>
        <name>Mg(2+)</name>
        <dbReference type="ChEBI" id="CHEBI:18420"/>
    </ligand>
</feature>
<feature type="binding site" evidence="1">
    <location>
        <position position="35"/>
    </location>
    <ligand>
        <name>(2E,6E)-farnesyl diphosphate</name>
        <dbReference type="ChEBI" id="CHEBI:175763"/>
    </ligand>
</feature>
<feature type="binding site" evidence="1">
    <location>
        <position position="37"/>
    </location>
    <ligand>
        <name>(2E,6E)-farnesyl diphosphate</name>
        <dbReference type="ChEBI" id="CHEBI:175763"/>
    </ligand>
</feature>
<feature type="binding site" evidence="1">
    <location>
        <position position="38"/>
    </location>
    <ligand>
        <name>(2E,6E)-farnesyl diphosphate</name>
        <dbReference type="ChEBI" id="CHEBI:175763"/>
    </ligand>
</feature>
<feature type="binding site" evidence="1">
    <location>
        <position position="38"/>
    </location>
    <ligand>
        <name>isopentenyl diphosphate</name>
        <dbReference type="ChEBI" id="CHEBI:128769"/>
    </ligand>
</feature>
<feature type="binding site" evidence="1">
    <location>
        <position position="85"/>
    </location>
    <ligand>
        <name>(2E,6E)-farnesyl diphosphate</name>
        <dbReference type="ChEBI" id="CHEBI:175763"/>
    </ligand>
</feature>
<feature type="binding site" evidence="1">
    <location>
        <position position="85"/>
    </location>
    <ligand>
        <name>isopentenyl diphosphate</name>
        <dbReference type="ChEBI" id="CHEBI:128769"/>
    </ligand>
</feature>
<feature type="binding site" evidence="1">
    <location>
        <position position="205"/>
    </location>
    <ligand>
        <name>isopentenyl diphosphate</name>
        <dbReference type="ChEBI" id="CHEBI:128769"/>
    </ligand>
</feature>
<feature type="binding site" evidence="1">
    <location>
        <position position="211"/>
    </location>
    <ligand>
        <name>isopentenyl diphosphate</name>
        <dbReference type="ChEBI" id="CHEBI:128769"/>
    </ligand>
</feature>
<feature type="binding site" evidence="1">
    <location>
        <position position="213"/>
    </location>
    <ligand>
        <name>isopentenyl diphosphate</name>
        <dbReference type="ChEBI" id="CHEBI:128769"/>
    </ligand>
</feature>
<feature type="splice variant" id="VSP_010032" description="In isoform 2." evidence="6">
    <original>Q</original>
    <variation>QQ</variation>
    <location>
        <position position="255"/>
    </location>
</feature>
<feature type="mutagenesis site" description="Impaired formation of dolichol species, leading to defects in inner retina and synaptic transmission in knockin mice. Knockin mice do notshow retinal degeneration." evidence="3 5">
    <original>K</original>
    <variation>E</variation>
    <location>
        <position position="42"/>
    </location>
</feature>
<feature type="sequence conflict" description="In Ref. 1; BAC29643." evidence="8" ref="1">
    <original>A</original>
    <variation>L</variation>
    <location>
        <position position="30"/>
    </location>
</feature>
<keyword id="KW-0025">Alternative splicing</keyword>
<keyword id="KW-0256">Endoplasmic reticulum</keyword>
<keyword id="KW-0443">Lipid metabolism</keyword>
<keyword id="KW-0460">Magnesium</keyword>
<keyword id="KW-0472">Membrane</keyword>
<keyword id="KW-0479">Metal-binding</keyword>
<keyword id="KW-1185">Reference proteome</keyword>
<keyword id="KW-0808">Transferase</keyword>
<gene>
    <name evidence="9" type="primary">Dhdds</name>
</gene>
<protein>
    <recommendedName>
        <fullName evidence="8">Dehydrodolichyl diphosphate synthase complex subunit Dhdds</fullName>
        <ecNumber evidence="1">2.5.1.87</ecNumber>
    </recommendedName>
    <alternativeName>
        <fullName evidence="1">Cis-isoprenyltransferase</fullName>
        <shortName evidence="1">CIT</shortName>
        <shortName evidence="1">Cis-IPTase</shortName>
    </alternativeName>
</protein>
<organism>
    <name type="scientific">Mus musculus</name>
    <name type="common">Mouse</name>
    <dbReference type="NCBI Taxonomy" id="10090"/>
    <lineage>
        <taxon>Eukaryota</taxon>
        <taxon>Metazoa</taxon>
        <taxon>Chordata</taxon>
        <taxon>Craniata</taxon>
        <taxon>Vertebrata</taxon>
        <taxon>Euteleostomi</taxon>
        <taxon>Mammalia</taxon>
        <taxon>Eutheria</taxon>
        <taxon>Euarchontoglires</taxon>
        <taxon>Glires</taxon>
        <taxon>Rodentia</taxon>
        <taxon>Myomorpha</taxon>
        <taxon>Muroidea</taxon>
        <taxon>Muridae</taxon>
        <taxon>Murinae</taxon>
        <taxon>Mus</taxon>
        <taxon>Mus</taxon>
    </lineage>
</organism>
<accession>Q99KU1</accession>
<accession>A3KGL4</accession>
<accession>Q3UF13</accession>
<accession>Q8BZ16</accession>
<accession>Q8BZK8</accession>
<name>DHDDS_MOUSE</name>
<evidence type="ECO:0000250" key="1">
    <source>
        <dbReference type="UniProtKB" id="Q86SQ9"/>
    </source>
</evidence>
<evidence type="ECO:0000269" key="2">
    <source>
    </source>
</evidence>
<evidence type="ECO:0000269" key="3">
    <source>
    </source>
</evidence>
<evidence type="ECO:0000269" key="4">
    <source>
    </source>
</evidence>
<evidence type="ECO:0000269" key="5">
    <source>
    </source>
</evidence>
<evidence type="ECO:0000303" key="6">
    <source>
    </source>
</evidence>
<evidence type="ECO:0000303" key="7">
    <source>
    </source>
</evidence>
<evidence type="ECO:0000305" key="8"/>
<evidence type="ECO:0000312" key="9">
    <source>
        <dbReference type="MGI" id="MGI:1914672"/>
    </source>
</evidence>
<proteinExistence type="evidence at protein level"/>
<sequence length="333" mass="38509">MSWIKEGELSLWERFCANIIKAGPVPKHIAFIMDGNRRYAKKCQVERQEGHTQGFNKLAETLRWCLNLGILEVTVYAFSIENFKRSKSEVDGLLDLARQKFSCLMEEQEKLQKHGVCIRVLGDLHLLPLDLQEKIAHAIQATKNYNKCFLNVCFAYTSRHEIANAVREMAWGVEQGLLEPSDVSESLLDKCLYSNHSPHPDILIRTSGEVRLSDFLLWQTSHSCLVFQPVLWPEYTFWNLCEAILQFQRNHGALQKARDMYAEERKRRQLERDQAAVTEQLLREGLQASGDAQLRRTRLHKLSTKREERVQGFLKALELKRANWLALWGTASA</sequence>
<dbReference type="EC" id="2.5.1.87" evidence="1"/>
<dbReference type="EMBL" id="AK034277">
    <property type="protein sequence ID" value="BAC28657.1"/>
    <property type="molecule type" value="mRNA"/>
</dbReference>
<dbReference type="EMBL" id="AK036929">
    <property type="protein sequence ID" value="BAC29643.1"/>
    <property type="molecule type" value="mRNA"/>
</dbReference>
<dbReference type="EMBL" id="AK049991">
    <property type="protein sequence ID" value="BAC34020.1"/>
    <property type="molecule type" value="mRNA"/>
</dbReference>
<dbReference type="EMBL" id="AK135087">
    <property type="protein sequence ID" value="BAE22416.1"/>
    <property type="molecule type" value="mRNA"/>
</dbReference>
<dbReference type="EMBL" id="AK149138">
    <property type="protein sequence ID" value="BAE28748.1"/>
    <property type="molecule type" value="mRNA"/>
</dbReference>
<dbReference type="EMBL" id="AK171207">
    <property type="protein sequence ID" value="BAE42313.1"/>
    <property type="molecule type" value="mRNA"/>
</dbReference>
<dbReference type="EMBL" id="AL670680">
    <property type="status" value="NOT_ANNOTATED_CDS"/>
    <property type="molecule type" value="Genomic_DNA"/>
</dbReference>
<dbReference type="EMBL" id="AL837508">
    <property type="status" value="NOT_ANNOTATED_CDS"/>
    <property type="molecule type" value="Genomic_DNA"/>
</dbReference>
<dbReference type="EMBL" id="BC004011">
    <property type="protein sequence ID" value="AAH04011.1"/>
    <property type="molecule type" value="mRNA"/>
</dbReference>
<dbReference type="CCDS" id="CCDS18760.1">
    <molecule id="Q99KU1-1"/>
</dbReference>
<dbReference type="CCDS" id="CCDS89839.1">
    <molecule id="Q99KU1-2"/>
</dbReference>
<dbReference type="RefSeq" id="NP_001349888.1">
    <molecule id="Q99KU1-1"/>
    <property type="nucleotide sequence ID" value="NM_001362959.1"/>
</dbReference>
<dbReference type="RefSeq" id="NP_001349889.1">
    <molecule id="Q99KU1-2"/>
    <property type="nucleotide sequence ID" value="NM_001362960.1"/>
</dbReference>
<dbReference type="RefSeq" id="NP_001349891.1">
    <molecule id="Q99KU1-1"/>
    <property type="nucleotide sequence ID" value="NM_001362962.1"/>
</dbReference>
<dbReference type="RefSeq" id="NP_080420.2">
    <molecule id="Q99KU1-1"/>
    <property type="nucleotide sequence ID" value="NM_026144.4"/>
</dbReference>
<dbReference type="RefSeq" id="XP_030109583.1">
    <molecule id="Q99KU1-2"/>
    <property type="nucleotide sequence ID" value="XM_030253723.2"/>
</dbReference>
<dbReference type="RefSeq" id="XP_030109584.1">
    <molecule id="Q99KU1-2"/>
    <property type="nucleotide sequence ID" value="XM_030253724.2"/>
</dbReference>
<dbReference type="SMR" id="Q99KU1"/>
<dbReference type="BioGRID" id="212176">
    <property type="interactions" value="1"/>
</dbReference>
<dbReference type="FunCoup" id="Q99KU1">
    <property type="interactions" value="1373"/>
</dbReference>
<dbReference type="STRING" id="10090.ENSMUSP00000116098"/>
<dbReference type="iPTMnet" id="Q99KU1"/>
<dbReference type="PhosphoSitePlus" id="Q99KU1"/>
<dbReference type="PaxDb" id="10090-ENSMUSP00000012262"/>
<dbReference type="ProteomicsDB" id="279862">
    <molecule id="Q99KU1-1"/>
</dbReference>
<dbReference type="ProteomicsDB" id="279863">
    <molecule id="Q99KU1-2"/>
</dbReference>
<dbReference type="Pumba" id="Q99KU1"/>
<dbReference type="Antibodypedia" id="16091">
    <property type="antibodies" value="110 antibodies from 22 providers"/>
</dbReference>
<dbReference type="DNASU" id="67422"/>
<dbReference type="Ensembl" id="ENSMUST00000012262.12">
    <molecule id="Q99KU1-1"/>
    <property type="protein sequence ID" value="ENSMUSP00000012262.6"/>
    <property type="gene ID" value="ENSMUSG00000012117.14"/>
</dbReference>
<dbReference type="Ensembl" id="ENSMUST00000105887.8">
    <molecule id="Q99KU1-2"/>
    <property type="protein sequence ID" value="ENSMUSP00000101511.2"/>
    <property type="gene ID" value="ENSMUSG00000012117.14"/>
</dbReference>
<dbReference type="Ensembl" id="ENSMUST00000144668.8">
    <molecule id="Q99KU1-1"/>
    <property type="protein sequence ID" value="ENSMUSP00000116098.2"/>
    <property type="gene ID" value="ENSMUSG00000012117.14"/>
</dbReference>
<dbReference type="GeneID" id="67422"/>
<dbReference type="KEGG" id="mmu:67422"/>
<dbReference type="UCSC" id="uc008vds.1">
    <molecule id="Q99KU1-1"/>
    <property type="organism name" value="mouse"/>
</dbReference>
<dbReference type="UCSC" id="uc008vdv.1">
    <molecule id="Q99KU1-2"/>
    <property type="organism name" value="mouse"/>
</dbReference>
<dbReference type="AGR" id="MGI:1914672"/>
<dbReference type="CTD" id="79947"/>
<dbReference type="MGI" id="MGI:1914672">
    <property type="gene designation" value="Dhdds"/>
</dbReference>
<dbReference type="VEuPathDB" id="HostDB:ENSMUSG00000012117"/>
<dbReference type="eggNOG" id="KOG1602">
    <property type="taxonomic scope" value="Eukaryota"/>
</dbReference>
<dbReference type="GeneTree" id="ENSGT00390000007879"/>
<dbReference type="InParanoid" id="Q99KU1"/>
<dbReference type="OMA" id="FDRRDLW"/>
<dbReference type="PhylomeDB" id="Q99KU1"/>
<dbReference type="TreeFam" id="TF323753"/>
<dbReference type="Reactome" id="R-MMU-446199">
    <property type="pathway name" value="Synthesis of Dolichyl-phosphate"/>
</dbReference>
<dbReference type="UniPathway" id="UPA00378"/>
<dbReference type="BioGRID-ORCS" id="67422">
    <property type="hits" value="24 hits in 79 CRISPR screens"/>
</dbReference>
<dbReference type="ChiTaRS" id="Dhdds">
    <property type="organism name" value="mouse"/>
</dbReference>
<dbReference type="PRO" id="PR:Q99KU1"/>
<dbReference type="Proteomes" id="UP000000589">
    <property type="component" value="Chromosome 4"/>
</dbReference>
<dbReference type="RNAct" id="Q99KU1">
    <property type="molecule type" value="protein"/>
</dbReference>
<dbReference type="Bgee" id="ENSMUSG00000012117">
    <property type="expression patterns" value="Expressed in saccule of membranous labyrinth and 259 other cell types or tissues"/>
</dbReference>
<dbReference type="ExpressionAtlas" id="Q99KU1">
    <property type="expression patterns" value="baseline and differential"/>
</dbReference>
<dbReference type="GO" id="GO:1904423">
    <property type="term" value="C:dehydrodolichyl diphosphate synthase complex"/>
    <property type="evidence" value="ECO:0000250"/>
    <property type="project" value="UniProtKB"/>
</dbReference>
<dbReference type="GO" id="GO:0005789">
    <property type="term" value="C:endoplasmic reticulum membrane"/>
    <property type="evidence" value="ECO:0007669"/>
    <property type="project" value="UniProtKB-SubCell"/>
</dbReference>
<dbReference type="GO" id="GO:0045547">
    <property type="term" value="F:ditrans,polycis-polyprenyl diphosphate synthase [(2E,6E)-farnesyl diphosphate specific] activity"/>
    <property type="evidence" value="ECO:0007669"/>
    <property type="project" value="UniProtKB-EC"/>
</dbReference>
<dbReference type="GO" id="GO:0046872">
    <property type="term" value="F:metal ion binding"/>
    <property type="evidence" value="ECO:0007669"/>
    <property type="project" value="UniProtKB-KW"/>
</dbReference>
<dbReference type="GO" id="GO:0019408">
    <property type="term" value="P:dolichol biosynthetic process"/>
    <property type="evidence" value="ECO:0007669"/>
    <property type="project" value="Ensembl"/>
</dbReference>
<dbReference type="GO" id="GO:0006489">
    <property type="term" value="P:dolichyl diphosphate biosynthetic process"/>
    <property type="evidence" value="ECO:0000250"/>
    <property type="project" value="UniProtKB"/>
</dbReference>
<dbReference type="CDD" id="cd00475">
    <property type="entry name" value="Cis_IPPS"/>
    <property type="match status" value="1"/>
</dbReference>
<dbReference type="FunFam" id="3.40.1180.10:FF:000006">
    <property type="entry name" value="Alkyl transferase"/>
    <property type="match status" value="1"/>
</dbReference>
<dbReference type="FunFam" id="3.40.1180.10:FF:000009">
    <property type="entry name" value="Alkyl transferase"/>
    <property type="match status" value="1"/>
</dbReference>
<dbReference type="Gene3D" id="3.40.1180.10">
    <property type="entry name" value="Decaprenyl diphosphate synthase-like"/>
    <property type="match status" value="1"/>
</dbReference>
<dbReference type="HAMAP" id="MF_01139">
    <property type="entry name" value="ISPT"/>
    <property type="match status" value="1"/>
</dbReference>
<dbReference type="InterPro" id="IPR001441">
    <property type="entry name" value="UPP_synth-like"/>
</dbReference>
<dbReference type="InterPro" id="IPR018520">
    <property type="entry name" value="UPP_synth-like_CS"/>
</dbReference>
<dbReference type="InterPro" id="IPR036424">
    <property type="entry name" value="UPP_synth-like_sf"/>
</dbReference>
<dbReference type="NCBIfam" id="TIGR00055">
    <property type="entry name" value="uppS"/>
    <property type="match status" value="1"/>
</dbReference>
<dbReference type="PANTHER" id="PTHR10291:SF43">
    <property type="entry name" value="DEHYDRODOLICHYL DIPHOSPHATE SYNTHASE COMPLEX SUBUNIT DHDDS"/>
    <property type="match status" value="1"/>
</dbReference>
<dbReference type="PANTHER" id="PTHR10291">
    <property type="entry name" value="DEHYDRODOLICHYL DIPHOSPHATE SYNTHASE FAMILY MEMBER"/>
    <property type="match status" value="1"/>
</dbReference>
<dbReference type="Pfam" id="PF01255">
    <property type="entry name" value="Prenyltransf"/>
    <property type="match status" value="1"/>
</dbReference>
<dbReference type="SUPFAM" id="SSF64005">
    <property type="entry name" value="Undecaprenyl diphosphate synthase"/>
    <property type="match status" value="1"/>
</dbReference>
<dbReference type="PROSITE" id="PS01066">
    <property type="entry name" value="UPP_SYNTHASE"/>
    <property type="match status" value="1"/>
</dbReference>